<proteinExistence type="evidence at protein level"/>
<sequence length="130" mass="13921">MFKFVMICAVLGLAVANPPVPHSLGRSEDVHADVLSQSDDVRADGFDSSLHTSNGIEQAASGDAHGNIHGNFGWISPEGEHVEVKYVANENGYQPSGAWIPTPPPIPEAIARAVAWLESHPPAPEHPRHH</sequence>
<comment type="function">
    <text>Component of the larval cuticle.</text>
</comment>
<name>LCP1_DROME</name>
<organism>
    <name type="scientific">Drosophila melanogaster</name>
    <name type="common">Fruit fly</name>
    <dbReference type="NCBI Taxonomy" id="7227"/>
    <lineage>
        <taxon>Eukaryota</taxon>
        <taxon>Metazoa</taxon>
        <taxon>Ecdysozoa</taxon>
        <taxon>Arthropoda</taxon>
        <taxon>Hexapoda</taxon>
        <taxon>Insecta</taxon>
        <taxon>Pterygota</taxon>
        <taxon>Neoptera</taxon>
        <taxon>Endopterygota</taxon>
        <taxon>Diptera</taxon>
        <taxon>Brachycera</taxon>
        <taxon>Muscomorpha</taxon>
        <taxon>Ephydroidea</taxon>
        <taxon>Drosophilidae</taxon>
        <taxon>Drosophila</taxon>
        <taxon>Sophophora</taxon>
    </lineage>
</organism>
<dbReference type="EMBL" id="V00202">
    <property type="protein sequence ID" value="CAA23487.1"/>
    <property type="molecule type" value="Genomic_DNA"/>
</dbReference>
<dbReference type="EMBL" id="AE013599">
    <property type="protein sequence ID" value="AAF59096.1"/>
    <property type="molecule type" value="Genomic_DNA"/>
</dbReference>
<dbReference type="PIR" id="A03328">
    <property type="entry name" value="UCFF1L"/>
</dbReference>
<dbReference type="PIR" id="A25299">
    <property type="entry name" value="A25299"/>
</dbReference>
<dbReference type="RefSeq" id="NP_001260801.1">
    <property type="nucleotide sequence ID" value="NM_001273872.2"/>
</dbReference>
<dbReference type="RefSeq" id="NP_476619.1">
    <property type="nucleotide sequence ID" value="NM_057271.4"/>
</dbReference>
<dbReference type="BioGRID" id="61670">
    <property type="interactions" value="7"/>
</dbReference>
<dbReference type="DIP" id="DIP-18177N"/>
<dbReference type="FunCoup" id="P02839">
    <property type="interactions" value="30"/>
</dbReference>
<dbReference type="IntAct" id="P02839">
    <property type="interactions" value="1"/>
</dbReference>
<dbReference type="STRING" id="7227.FBpp0305735"/>
<dbReference type="PaxDb" id="7227-FBpp0305735"/>
<dbReference type="DNASU" id="35817"/>
<dbReference type="EnsemblMetazoa" id="FBtr0088763">
    <property type="protein sequence ID" value="FBpp0087841"/>
    <property type="gene ID" value="FBgn0002531"/>
</dbReference>
<dbReference type="EnsemblMetazoa" id="FBtr0333557">
    <property type="protein sequence ID" value="FBpp0305735"/>
    <property type="gene ID" value="FBgn0002531"/>
</dbReference>
<dbReference type="GeneID" id="35817"/>
<dbReference type="KEGG" id="dme:Dmel_CG11650"/>
<dbReference type="AGR" id="FB:FBgn0002531"/>
<dbReference type="CTD" id="3936"/>
<dbReference type="FlyBase" id="FBgn0002531">
    <property type="gene designation" value="Lcp1"/>
</dbReference>
<dbReference type="VEuPathDB" id="VectorBase:FBgn0002531"/>
<dbReference type="eggNOG" id="ENOG502TD3C">
    <property type="taxonomic scope" value="Eukaryota"/>
</dbReference>
<dbReference type="GeneTree" id="ENSGT00900000141325"/>
<dbReference type="HOGENOM" id="CLU_065450_3_1_1"/>
<dbReference type="InParanoid" id="P02839"/>
<dbReference type="OMA" id="QGKFGWI"/>
<dbReference type="OrthoDB" id="6343684at2759"/>
<dbReference type="PhylomeDB" id="P02839"/>
<dbReference type="BioGRID-ORCS" id="35817">
    <property type="hits" value="0 hits in 1 CRISPR screen"/>
</dbReference>
<dbReference type="GenomeRNAi" id="35817"/>
<dbReference type="PRO" id="PR:P02839"/>
<dbReference type="Proteomes" id="UP000000803">
    <property type="component" value="Chromosome 2R"/>
</dbReference>
<dbReference type="Bgee" id="FBgn0002531">
    <property type="expression patterns" value="Expressed in saliva-secreting gland and 13 other cell types or tissues"/>
</dbReference>
<dbReference type="ExpressionAtlas" id="P02839">
    <property type="expression patterns" value="baseline and differential"/>
</dbReference>
<dbReference type="GO" id="GO:0062129">
    <property type="term" value="C:chitin-based extracellular matrix"/>
    <property type="evidence" value="ECO:0000314"/>
    <property type="project" value="FlyBase"/>
</dbReference>
<dbReference type="GO" id="GO:0008010">
    <property type="term" value="F:structural constituent of chitin-based larval cuticle"/>
    <property type="evidence" value="ECO:0000314"/>
    <property type="project" value="FlyBase"/>
</dbReference>
<dbReference type="GO" id="GO:0040003">
    <property type="term" value="P:chitin-based cuticle development"/>
    <property type="evidence" value="ECO:0000255"/>
    <property type="project" value="FlyBase"/>
</dbReference>
<dbReference type="GO" id="GO:0008363">
    <property type="term" value="P:larval chitin-based cuticle development"/>
    <property type="evidence" value="ECO:0000305"/>
    <property type="project" value="FlyBase"/>
</dbReference>
<dbReference type="InterPro" id="IPR031311">
    <property type="entry name" value="CHIT_BIND_RR_consensus"/>
</dbReference>
<dbReference type="InterPro" id="IPR050468">
    <property type="entry name" value="Cuticle_Struct_Prot"/>
</dbReference>
<dbReference type="InterPro" id="IPR000618">
    <property type="entry name" value="Insect_cuticle"/>
</dbReference>
<dbReference type="PANTHER" id="PTHR10380">
    <property type="entry name" value="CUTICLE PROTEIN"/>
    <property type="match status" value="1"/>
</dbReference>
<dbReference type="PANTHER" id="PTHR10380:SF237">
    <property type="entry name" value="CUTICULAR PROTEIN 65AU, ISOFORM A-RELATED"/>
    <property type="match status" value="1"/>
</dbReference>
<dbReference type="Pfam" id="PF00379">
    <property type="entry name" value="Chitin_bind_4"/>
    <property type="match status" value="1"/>
</dbReference>
<dbReference type="PROSITE" id="PS00233">
    <property type="entry name" value="CHIT_BIND_RR_1"/>
    <property type="match status" value="1"/>
</dbReference>
<dbReference type="PROSITE" id="PS51155">
    <property type="entry name" value="CHIT_BIND_RR_2"/>
    <property type="match status" value="1"/>
</dbReference>
<protein>
    <recommendedName>
        <fullName>Larval cuticle protein 1</fullName>
    </recommendedName>
    <alternativeName>
        <fullName>Larval cuticle protein I</fullName>
    </alternativeName>
</protein>
<evidence type="ECO:0000255" key="1">
    <source>
        <dbReference type="PROSITE-ProRule" id="PRU00497"/>
    </source>
</evidence>
<evidence type="ECO:0000305" key="2"/>
<reference key="1">
    <citation type="journal article" date="1982" name="Cell">
        <title>Cuticle protein genes of Drosophila: structure, organization and evolution of four clustered genes.</title>
        <authorList>
            <person name="Snyder M."/>
            <person name="Hunkapiller M."/>
            <person name="Yuen D."/>
            <person name="Silvert D."/>
            <person name="Fristrom J."/>
            <person name="Davidson N."/>
        </authorList>
    </citation>
    <scope>NUCLEOTIDE SEQUENCE [GENOMIC DNA]</scope>
    <scope>PARTIAL PROTEIN SEQUENCE</scope>
    <source>
        <strain>Canton-S</strain>
        <strain>Oregon-R</strain>
        <tissue>Larva</tissue>
    </source>
</reference>
<reference key="2">
    <citation type="journal article" date="2000" name="Science">
        <title>The genome sequence of Drosophila melanogaster.</title>
        <authorList>
            <person name="Adams M.D."/>
            <person name="Celniker S.E."/>
            <person name="Holt R.A."/>
            <person name="Evans C.A."/>
            <person name="Gocayne J.D."/>
            <person name="Amanatides P.G."/>
            <person name="Scherer S.E."/>
            <person name="Li P.W."/>
            <person name="Hoskins R.A."/>
            <person name="Galle R.F."/>
            <person name="George R.A."/>
            <person name="Lewis S.E."/>
            <person name="Richards S."/>
            <person name="Ashburner M."/>
            <person name="Henderson S.N."/>
            <person name="Sutton G.G."/>
            <person name="Wortman J.R."/>
            <person name="Yandell M.D."/>
            <person name="Zhang Q."/>
            <person name="Chen L.X."/>
            <person name="Brandon R.C."/>
            <person name="Rogers Y.-H.C."/>
            <person name="Blazej R.G."/>
            <person name="Champe M."/>
            <person name="Pfeiffer B.D."/>
            <person name="Wan K.H."/>
            <person name="Doyle C."/>
            <person name="Baxter E.G."/>
            <person name="Helt G."/>
            <person name="Nelson C.R."/>
            <person name="Miklos G.L.G."/>
            <person name="Abril J.F."/>
            <person name="Agbayani A."/>
            <person name="An H.-J."/>
            <person name="Andrews-Pfannkoch C."/>
            <person name="Baldwin D."/>
            <person name="Ballew R.M."/>
            <person name="Basu A."/>
            <person name="Baxendale J."/>
            <person name="Bayraktaroglu L."/>
            <person name="Beasley E.M."/>
            <person name="Beeson K.Y."/>
            <person name="Benos P.V."/>
            <person name="Berman B.P."/>
            <person name="Bhandari D."/>
            <person name="Bolshakov S."/>
            <person name="Borkova D."/>
            <person name="Botchan M.R."/>
            <person name="Bouck J."/>
            <person name="Brokstein P."/>
            <person name="Brottier P."/>
            <person name="Burtis K.C."/>
            <person name="Busam D.A."/>
            <person name="Butler H."/>
            <person name="Cadieu E."/>
            <person name="Center A."/>
            <person name="Chandra I."/>
            <person name="Cherry J.M."/>
            <person name="Cawley S."/>
            <person name="Dahlke C."/>
            <person name="Davenport L.B."/>
            <person name="Davies P."/>
            <person name="de Pablos B."/>
            <person name="Delcher A."/>
            <person name="Deng Z."/>
            <person name="Mays A.D."/>
            <person name="Dew I."/>
            <person name="Dietz S.M."/>
            <person name="Dodson K."/>
            <person name="Doup L.E."/>
            <person name="Downes M."/>
            <person name="Dugan-Rocha S."/>
            <person name="Dunkov B.C."/>
            <person name="Dunn P."/>
            <person name="Durbin K.J."/>
            <person name="Evangelista C.C."/>
            <person name="Ferraz C."/>
            <person name="Ferriera S."/>
            <person name="Fleischmann W."/>
            <person name="Fosler C."/>
            <person name="Gabrielian A.E."/>
            <person name="Garg N.S."/>
            <person name="Gelbart W.M."/>
            <person name="Glasser K."/>
            <person name="Glodek A."/>
            <person name="Gong F."/>
            <person name="Gorrell J.H."/>
            <person name="Gu Z."/>
            <person name="Guan P."/>
            <person name="Harris M."/>
            <person name="Harris N.L."/>
            <person name="Harvey D.A."/>
            <person name="Heiman T.J."/>
            <person name="Hernandez J.R."/>
            <person name="Houck J."/>
            <person name="Hostin D."/>
            <person name="Houston K.A."/>
            <person name="Howland T.J."/>
            <person name="Wei M.-H."/>
            <person name="Ibegwam C."/>
            <person name="Jalali M."/>
            <person name="Kalush F."/>
            <person name="Karpen G.H."/>
            <person name="Ke Z."/>
            <person name="Kennison J.A."/>
            <person name="Ketchum K.A."/>
            <person name="Kimmel B.E."/>
            <person name="Kodira C.D."/>
            <person name="Kraft C.L."/>
            <person name="Kravitz S."/>
            <person name="Kulp D."/>
            <person name="Lai Z."/>
            <person name="Lasko P."/>
            <person name="Lei Y."/>
            <person name="Levitsky A.A."/>
            <person name="Li J.H."/>
            <person name="Li Z."/>
            <person name="Liang Y."/>
            <person name="Lin X."/>
            <person name="Liu X."/>
            <person name="Mattei B."/>
            <person name="McIntosh T.C."/>
            <person name="McLeod M.P."/>
            <person name="McPherson D."/>
            <person name="Merkulov G."/>
            <person name="Milshina N.V."/>
            <person name="Mobarry C."/>
            <person name="Morris J."/>
            <person name="Moshrefi A."/>
            <person name="Mount S.M."/>
            <person name="Moy M."/>
            <person name="Murphy B."/>
            <person name="Murphy L."/>
            <person name="Muzny D.M."/>
            <person name="Nelson D.L."/>
            <person name="Nelson D.R."/>
            <person name="Nelson K.A."/>
            <person name="Nixon K."/>
            <person name="Nusskern D.R."/>
            <person name="Pacleb J.M."/>
            <person name="Palazzolo M."/>
            <person name="Pittman G.S."/>
            <person name="Pan S."/>
            <person name="Pollard J."/>
            <person name="Puri V."/>
            <person name="Reese M.G."/>
            <person name="Reinert K."/>
            <person name="Remington K."/>
            <person name="Saunders R.D.C."/>
            <person name="Scheeler F."/>
            <person name="Shen H."/>
            <person name="Shue B.C."/>
            <person name="Siden-Kiamos I."/>
            <person name="Simpson M."/>
            <person name="Skupski M.P."/>
            <person name="Smith T.J."/>
            <person name="Spier E."/>
            <person name="Spradling A.C."/>
            <person name="Stapleton M."/>
            <person name="Strong R."/>
            <person name="Sun E."/>
            <person name="Svirskas R."/>
            <person name="Tector C."/>
            <person name="Turner R."/>
            <person name="Venter E."/>
            <person name="Wang A.H."/>
            <person name="Wang X."/>
            <person name="Wang Z.-Y."/>
            <person name="Wassarman D.A."/>
            <person name="Weinstock G.M."/>
            <person name="Weissenbach J."/>
            <person name="Williams S.M."/>
            <person name="Woodage T."/>
            <person name="Worley K.C."/>
            <person name="Wu D."/>
            <person name="Yang S."/>
            <person name="Yao Q.A."/>
            <person name="Ye J."/>
            <person name="Yeh R.-F."/>
            <person name="Zaveri J.S."/>
            <person name="Zhan M."/>
            <person name="Zhang G."/>
            <person name="Zhao Q."/>
            <person name="Zheng L."/>
            <person name="Zheng X.H."/>
            <person name="Zhong F.N."/>
            <person name="Zhong W."/>
            <person name="Zhou X."/>
            <person name="Zhu S.C."/>
            <person name="Zhu X."/>
            <person name="Smith H.O."/>
            <person name="Gibbs R.A."/>
            <person name="Myers E.W."/>
            <person name="Rubin G.M."/>
            <person name="Venter J.C."/>
        </authorList>
    </citation>
    <scope>NUCLEOTIDE SEQUENCE [LARGE SCALE GENOMIC DNA]</scope>
    <source>
        <strain>Berkeley</strain>
    </source>
</reference>
<reference key="3">
    <citation type="journal article" date="2002" name="Genome Biol.">
        <title>Annotation of the Drosophila melanogaster euchromatic genome: a systematic review.</title>
        <authorList>
            <person name="Misra S."/>
            <person name="Crosby M.A."/>
            <person name="Mungall C.J."/>
            <person name="Matthews B.B."/>
            <person name="Campbell K.S."/>
            <person name="Hradecky P."/>
            <person name="Huang Y."/>
            <person name="Kaminker J.S."/>
            <person name="Millburn G.H."/>
            <person name="Prochnik S.E."/>
            <person name="Smith C.D."/>
            <person name="Tupy J.L."/>
            <person name="Whitfield E.J."/>
            <person name="Bayraktaroglu L."/>
            <person name="Berman B.P."/>
            <person name="Bettencourt B.R."/>
            <person name="Celniker S.E."/>
            <person name="de Grey A.D.N.J."/>
            <person name="Drysdale R.A."/>
            <person name="Harris N.L."/>
            <person name="Richter J."/>
            <person name="Russo S."/>
            <person name="Schroeder A.J."/>
            <person name="Shu S.Q."/>
            <person name="Stapleton M."/>
            <person name="Yamada C."/>
            <person name="Ashburner M."/>
            <person name="Gelbart W.M."/>
            <person name="Rubin G.M."/>
            <person name="Lewis S.E."/>
        </authorList>
    </citation>
    <scope>GENOME REANNOTATION</scope>
    <source>
        <strain>Berkeley</strain>
    </source>
</reference>
<gene>
    <name type="primary">Lcp1</name>
    <name type="ORF">CG11650</name>
</gene>
<accession>P02839</accession>
<accession>Q24290</accession>
<accession>Q9V4S9</accession>
<feature type="signal peptide">
    <location>
        <begin position="1"/>
        <end position="16"/>
    </location>
</feature>
<feature type="chain" id="PRO_0000006387" description="Larval cuticle protein 1">
    <location>
        <begin position="17"/>
        <end position="130"/>
    </location>
</feature>
<feature type="domain" description="Chitin-binding type R&amp;R" evidence="1">
    <location>
        <begin position="43"/>
        <end position="104"/>
    </location>
</feature>
<feature type="sequence conflict" description="In Ref. 1; CAA23487." evidence="2" ref="1">
    <original>Q</original>
    <variation>R</variation>
    <location>
        <position position="37"/>
    </location>
</feature>
<keyword id="KW-0193">Cuticle</keyword>
<keyword id="KW-0903">Direct protein sequencing</keyword>
<keyword id="KW-1185">Reference proteome</keyword>
<keyword id="KW-0732">Signal</keyword>